<evidence type="ECO:0000255" key="1">
    <source>
        <dbReference type="PROSITE-ProRule" id="PRU01330"/>
    </source>
</evidence>
<evidence type="ECO:0000255" key="2">
    <source>
        <dbReference type="PROSITE-ProRule" id="PRU01331"/>
    </source>
</evidence>
<evidence type="ECO:0000305" key="3"/>
<dbReference type="EC" id="6.3.1.2"/>
<dbReference type="EMBL" id="X04763">
    <property type="protein sequence ID" value="CAA28456.1"/>
    <property type="molecule type" value="mRNA"/>
</dbReference>
<dbReference type="EMBL" id="U28924">
    <property type="protein sequence ID" value="AAB03492.1"/>
    <property type="status" value="ALT_SEQ"/>
    <property type="molecule type" value="Genomic_DNA"/>
</dbReference>
<dbReference type="EMBL" id="X60832">
    <property type="protein sequence ID" value="CAA43223.1"/>
    <property type="molecule type" value="Genomic_DNA"/>
</dbReference>
<dbReference type="PIR" id="B26171">
    <property type="entry name" value="AJPMQA"/>
</dbReference>
<dbReference type="PIR" id="S62711">
    <property type="entry name" value="S62711"/>
</dbReference>
<dbReference type="SMR" id="P07694"/>
<dbReference type="EnsemblPlants" id="Psat0s690g0040.1">
    <property type="protein sequence ID" value="Psat0s690g0040.1.cds"/>
    <property type="gene ID" value="Psat0s690g0040"/>
</dbReference>
<dbReference type="EnsemblPlants" id="Psat0s690g0040.2">
    <property type="protein sequence ID" value="Psat0s690g0040.2.cds"/>
    <property type="gene ID" value="Psat0s690g0040"/>
</dbReference>
<dbReference type="Gramene" id="Psat0s690g0040.1">
    <property type="protein sequence ID" value="Psat0s690g0040.1.cds"/>
    <property type="gene ID" value="Psat0s690g0040"/>
</dbReference>
<dbReference type="Gramene" id="Psat0s690g0040.2">
    <property type="protein sequence ID" value="Psat0s690g0040.2.cds"/>
    <property type="gene ID" value="Psat0s690g0040"/>
</dbReference>
<dbReference type="OrthoDB" id="1936100at2759"/>
<dbReference type="GO" id="GO:0005737">
    <property type="term" value="C:cytoplasm"/>
    <property type="evidence" value="ECO:0007669"/>
    <property type="project" value="UniProtKB-SubCell"/>
</dbReference>
<dbReference type="GO" id="GO:0005524">
    <property type="term" value="F:ATP binding"/>
    <property type="evidence" value="ECO:0007669"/>
    <property type="project" value="UniProtKB-KW"/>
</dbReference>
<dbReference type="GO" id="GO:0004356">
    <property type="term" value="F:glutamine synthetase activity"/>
    <property type="evidence" value="ECO:0007669"/>
    <property type="project" value="UniProtKB-EC"/>
</dbReference>
<dbReference type="GO" id="GO:0006542">
    <property type="term" value="P:glutamine biosynthetic process"/>
    <property type="evidence" value="ECO:0007669"/>
    <property type="project" value="InterPro"/>
</dbReference>
<dbReference type="FunFam" id="3.30.590.10:FF:000004">
    <property type="entry name" value="Glutamine synthetase"/>
    <property type="match status" value="1"/>
</dbReference>
<dbReference type="FunFam" id="3.10.20.70:FF:000003">
    <property type="entry name" value="Glutamine synthetase, chloroplastic"/>
    <property type="match status" value="1"/>
</dbReference>
<dbReference type="Gene3D" id="3.10.20.70">
    <property type="entry name" value="Glutamine synthetase, N-terminal domain"/>
    <property type="match status" value="1"/>
</dbReference>
<dbReference type="Gene3D" id="3.30.590.10">
    <property type="entry name" value="Glutamine synthetase/guanido kinase, catalytic domain"/>
    <property type="match status" value="1"/>
</dbReference>
<dbReference type="InterPro" id="IPR008147">
    <property type="entry name" value="Gln_synt_N"/>
</dbReference>
<dbReference type="InterPro" id="IPR036651">
    <property type="entry name" value="Gln_synt_N_sf"/>
</dbReference>
<dbReference type="InterPro" id="IPR014746">
    <property type="entry name" value="Gln_synth/guanido_kin_cat_dom"/>
</dbReference>
<dbReference type="InterPro" id="IPR008146">
    <property type="entry name" value="Gln_synth_cat_dom"/>
</dbReference>
<dbReference type="InterPro" id="IPR027303">
    <property type="entry name" value="Gln_synth_gly_rich_site"/>
</dbReference>
<dbReference type="InterPro" id="IPR027302">
    <property type="entry name" value="Gln_synth_N_conserv_site"/>
</dbReference>
<dbReference type="InterPro" id="IPR050292">
    <property type="entry name" value="Glutamine_Synthetase"/>
</dbReference>
<dbReference type="PANTHER" id="PTHR20852">
    <property type="entry name" value="GLUTAMINE SYNTHETASE"/>
    <property type="match status" value="1"/>
</dbReference>
<dbReference type="PANTHER" id="PTHR20852:SF110">
    <property type="entry name" value="GLUTAMINE SYNTHETASE"/>
    <property type="match status" value="1"/>
</dbReference>
<dbReference type="Pfam" id="PF00120">
    <property type="entry name" value="Gln-synt_C"/>
    <property type="match status" value="1"/>
</dbReference>
<dbReference type="Pfam" id="PF03951">
    <property type="entry name" value="Gln-synt_N"/>
    <property type="match status" value="1"/>
</dbReference>
<dbReference type="SMART" id="SM01230">
    <property type="entry name" value="Gln-synt_C"/>
    <property type="match status" value="1"/>
</dbReference>
<dbReference type="SUPFAM" id="SSF54368">
    <property type="entry name" value="Glutamine synthetase, N-terminal domain"/>
    <property type="match status" value="1"/>
</dbReference>
<dbReference type="SUPFAM" id="SSF55931">
    <property type="entry name" value="Glutamine synthetase/guanido kinase"/>
    <property type="match status" value="1"/>
</dbReference>
<dbReference type="PROSITE" id="PS00180">
    <property type="entry name" value="GLNA_1"/>
    <property type="match status" value="1"/>
</dbReference>
<dbReference type="PROSITE" id="PS00181">
    <property type="entry name" value="GLNA_ATP"/>
    <property type="match status" value="1"/>
</dbReference>
<dbReference type="PROSITE" id="PS51986">
    <property type="entry name" value="GS_BETA_GRASP"/>
    <property type="match status" value="1"/>
</dbReference>
<dbReference type="PROSITE" id="PS51987">
    <property type="entry name" value="GS_CATALYTIC"/>
    <property type="match status" value="1"/>
</dbReference>
<keyword id="KW-0067">ATP-binding</keyword>
<keyword id="KW-0963">Cytoplasm</keyword>
<keyword id="KW-0436">Ligase</keyword>
<keyword id="KW-0535">Nitrogen fixation</keyword>
<keyword id="KW-0547">Nucleotide-binding</keyword>
<protein>
    <recommendedName>
        <fullName>Glutamine synthetase root isozyme A</fullName>
        <ecNumber>6.3.1.2</ecNumber>
    </recommendedName>
    <alternativeName>
        <fullName>Cytosolic GS3 A</fullName>
    </alternativeName>
    <alternativeName>
        <fullName>Glutamate--ammonia ligase</fullName>
    </alternativeName>
</protein>
<sequence>MSSLSDLINFNLSDSTEKIIAEYIWVGGSGIDIRSKARTLPGPVSDPAKLPKWNYDGSSTNQAPGKDSEVILYPQAIFKDPFRRGNNILVICDVYTPAGEPLPTNKRYNAAKIFSHPDVAAEVPWYGIEQEYTLLQKDINWPLGWPIGGYPGKQGPYYCGIGADKAYGRDIVDAHYKACLFAGINISGINGEVMPGQWEFQVGPSVGISAGDEIWAARYILERITEIAGVVVSFDPKPIPGDWNGAGAHANFSTKSMRENGGYEVIKKAIEKLGLRHKEHIAAYGEGNERRLTGKHETADINVFSWGVANRGSSIRVGRDTEKDGKGYFEDRRPASNMDPYVVTSMIAETTILWKKP</sequence>
<organism>
    <name type="scientific">Pisum sativum</name>
    <name type="common">Garden pea</name>
    <name type="synonym">Lathyrus oleraceus</name>
    <dbReference type="NCBI Taxonomy" id="3888"/>
    <lineage>
        <taxon>Eukaryota</taxon>
        <taxon>Viridiplantae</taxon>
        <taxon>Streptophyta</taxon>
        <taxon>Embryophyta</taxon>
        <taxon>Tracheophyta</taxon>
        <taxon>Spermatophyta</taxon>
        <taxon>Magnoliopsida</taxon>
        <taxon>eudicotyledons</taxon>
        <taxon>Gunneridae</taxon>
        <taxon>Pentapetalae</taxon>
        <taxon>rosids</taxon>
        <taxon>fabids</taxon>
        <taxon>Fabales</taxon>
        <taxon>Fabaceae</taxon>
        <taxon>Papilionoideae</taxon>
        <taxon>50 kb inversion clade</taxon>
        <taxon>NPAAA clade</taxon>
        <taxon>Hologalegina</taxon>
        <taxon>IRL clade</taxon>
        <taxon>Fabeae</taxon>
        <taxon>Pisum</taxon>
    </lineage>
</organism>
<reference key="1">
    <citation type="journal article" date="1987" name="EMBO J.">
        <title>Glutamine synthetase genes of pea encode distinct polypeptides which are differentially expressed in leaves, roots and nodules.</title>
        <authorList>
            <person name="Tingey S.V."/>
            <person name="Walker E.L."/>
            <person name="Coruzzi G.M."/>
        </authorList>
    </citation>
    <scope>NUCLEOTIDE SEQUENCE [MRNA]</scope>
    <source>
        <strain>cv. Sparkle</strain>
    </source>
</reference>
<reference key="2">
    <citation type="journal article" date="1995" name="Plant Mol. Biol.">
        <title>Molecular evolution of duplicate copies of genes encoding cytosolic glutamine synthetase in Pisum sativum.</title>
        <authorList>
            <person name="Walker E.L."/>
            <person name="Weeden N.F."/>
            <person name="Taylor C.B."/>
            <person name="Green P."/>
            <person name="Coruzzi G.M."/>
        </authorList>
    </citation>
    <scope>NUCLEOTIDE SEQUENCE [GENOMIC DNA]</scope>
    <source>
        <strain>cv. Feltham First</strain>
    </source>
</reference>
<reference key="3">
    <citation type="journal article" date="1991" name="Plant J.">
        <title>A promoter sequence involved in cell-specific expression of the pea glutamine synthetase GS3A gene in organs of transgenic tobacco and alfalfa.</title>
        <authorList>
            <person name="Brears T."/>
            <person name="Walker E.L."/>
            <person name="Coruzzi G.M."/>
        </authorList>
    </citation>
    <scope>NUCLEOTIDE SEQUENCE [GENOMIC DNA] OF 1-6</scope>
    <source>
        <strain>cv. Sparkle</strain>
    </source>
</reference>
<name>GLNA3_PEA</name>
<comment type="catalytic activity">
    <reaction>
        <text>L-glutamate + NH4(+) + ATP = L-glutamine + ADP + phosphate + H(+)</text>
        <dbReference type="Rhea" id="RHEA:16169"/>
        <dbReference type="ChEBI" id="CHEBI:15378"/>
        <dbReference type="ChEBI" id="CHEBI:28938"/>
        <dbReference type="ChEBI" id="CHEBI:29985"/>
        <dbReference type="ChEBI" id="CHEBI:30616"/>
        <dbReference type="ChEBI" id="CHEBI:43474"/>
        <dbReference type="ChEBI" id="CHEBI:58359"/>
        <dbReference type="ChEBI" id="CHEBI:456216"/>
        <dbReference type="EC" id="6.3.1.2"/>
    </reaction>
</comment>
<comment type="subunit">
    <text>Homooctamer.</text>
</comment>
<comment type="subcellular location">
    <subcellularLocation>
        <location>Cytoplasm</location>
    </subcellularLocation>
</comment>
<comment type="miscellaneous">
    <text>In pea there are distinct isozymes in leaves, roots and nodules.</text>
</comment>
<comment type="miscellaneous">
    <text>Irreversibly inhibited by the herbicide L-phosphinothricin (PPT).</text>
</comment>
<comment type="similarity">
    <text evidence="3">Belongs to the glutamine synthetase family.</text>
</comment>
<comment type="sequence caution" evidence="3">
    <conflict type="erroneous gene model prediction">
        <sequence resource="EMBL-CDS" id="AAB03492"/>
    </conflict>
</comment>
<feature type="chain" id="PRO_0000153189" description="Glutamine synthetase root isozyme A">
    <location>
        <begin position="1"/>
        <end position="357"/>
    </location>
</feature>
<feature type="domain" description="GS beta-grasp" evidence="1">
    <location>
        <begin position="19"/>
        <end position="99"/>
    </location>
</feature>
<feature type="domain" description="GS catalytic" evidence="2">
    <location>
        <begin position="106"/>
        <end position="357"/>
    </location>
</feature>
<proteinExistence type="evidence at transcript level"/>
<accession>P07694</accession>
<accession>Q43065</accession>
<gene>
    <name type="primary">GS3A</name>
</gene>